<proteinExistence type="inferred from homology"/>
<reference key="1">
    <citation type="journal article" date="2008" name="J. Bacteriol.">
        <title>Complete genome sequence of uropathogenic Proteus mirabilis, a master of both adherence and motility.</title>
        <authorList>
            <person name="Pearson M.M."/>
            <person name="Sebaihia M."/>
            <person name="Churcher C."/>
            <person name="Quail M.A."/>
            <person name="Seshasayee A.S."/>
            <person name="Luscombe N.M."/>
            <person name="Abdellah Z."/>
            <person name="Arrosmith C."/>
            <person name="Atkin B."/>
            <person name="Chillingworth T."/>
            <person name="Hauser H."/>
            <person name="Jagels K."/>
            <person name="Moule S."/>
            <person name="Mungall K."/>
            <person name="Norbertczak H."/>
            <person name="Rabbinowitsch E."/>
            <person name="Walker D."/>
            <person name="Whithead S."/>
            <person name="Thomson N.R."/>
            <person name="Rather P.N."/>
            <person name="Parkhill J."/>
            <person name="Mobley H.L.T."/>
        </authorList>
    </citation>
    <scope>NUCLEOTIDE SEQUENCE [LARGE SCALE GENOMIC DNA]</scope>
    <source>
        <strain>HI4320</strain>
    </source>
</reference>
<protein>
    <recommendedName>
        <fullName evidence="1">Protein RnfH</fullName>
    </recommendedName>
</protein>
<organism>
    <name type="scientific">Proteus mirabilis (strain HI4320)</name>
    <dbReference type="NCBI Taxonomy" id="529507"/>
    <lineage>
        <taxon>Bacteria</taxon>
        <taxon>Pseudomonadati</taxon>
        <taxon>Pseudomonadota</taxon>
        <taxon>Gammaproteobacteria</taxon>
        <taxon>Enterobacterales</taxon>
        <taxon>Morganellaceae</taxon>
        <taxon>Proteus</taxon>
    </lineage>
</organism>
<keyword id="KW-1185">Reference proteome</keyword>
<gene>
    <name evidence="1" type="primary">rnfH</name>
    <name type="ordered locus">PMI1904</name>
</gene>
<dbReference type="EMBL" id="AM942759">
    <property type="protein sequence ID" value="CAR43950.1"/>
    <property type="molecule type" value="Genomic_DNA"/>
</dbReference>
<dbReference type="RefSeq" id="WP_004243913.1">
    <property type="nucleotide sequence ID" value="NC_010554.1"/>
</dbReference>
<dbReference type="SMR" id="B4F063"/>
<dbReference type="EnsemblBacteria" id="CAR43950">
    <property type="protein sequence ID" value="CAR43950"/>
    <property type="gene ID" value="PMI1904"/>
</dbReference>
<dbReference type="GeneID" id="6803089"/>
<dbReference type="KEGG" id="pmr:PMI1904"/>
<dbReference type="eggNOG" id="COG2914">
    <property type="taxonomic scope" value="Bacteria"/>
</dbReference>
<dbReference type="HOGENOM" id="CLU_150721_1_0_6"/>
<dbReference type="Proteomes" id="UP000008319">
    <property type="component" value="Chromosome"/>
</dbReference>
<dbReference type="Gene3D" id="3.10.20.280">
    <property type="entry name" value="RnfH-like"/>
    <property type="match status" value="1"/>
</dbReference>
<dbReference type="HAMAP" id="MF_00460">
    <property type="entry name" value="UPF0125_RnfH"/>
    <property type="match status" value="1"/>
</dbReference>
<dbReference type="InterPro" id="IPR016155">
    <property type="entry name" value="Mopterin_synth/thiamin_S_b"/>
</dbReference>
<dbReference type="InterPro" id="IPR005346">
    <property type="entry name" value="RnfH"/>
</dbReference>
<dbReference type="InterPro" id="IPR037021">
    <property type="entry name" value="RnfH_sf"/>
</dbReference>
<dbReference type="NCBIfam" id="NF002490">
    <property type="entry name" value="PRK01777.1"/>
    <property type="match status" value="1"/>
</dbReference>
<dbReference type="PANTHER" id="PTHR37483">
    <property type="entry name" value="UPF0125 PROTEIN RATB"/>
    <property type="match status" value="1"/>
</dbReference>
<dbReference type="PANTHER" id="PTHR37483:SF1">
    <property type="entry name" value="UPF0125 PROTEIN RATB"/>
    <property type="match status" value="1"/>
</dbReference>
<dbReference type="Pfam" id="PF03658">
    <property type="entry name" value="Ub-RnfH"/>
    <property type="match status" value="1"/>
</dbReference>
<dbReference type="SUPFAM" id="SSF54285">
    <property type="entry name" value="MoaD/ThiS"/>
    <property type="match status" value="1"/>
</dbReference>
<name>RNFH_PROMH</name>
<feature type="chain" id="PRO_1000200188" description="Protein RnfH">
    <location>
        <begin position="1"/>
        <end position="97"/>
    </location>
</feature>
<sequence length="97" mass="11101">MTKIWVEVAYALPDKQYVIPVELTLGDTVEQAIIASNILTICNDIDLTKNKVGIYSRPAKLSDNVRDGDRVEIYRPLIADPKEMRRKRAEKARQKTE</sequence>
<evidence type="ECO:0000255" key="1">
    <source>
        <dbReference type="HAMAP-Rule" id="MF_00460"/>
    </source>
</evidence>
<comment type="similarity">
    <text evidence="1">Belongs to the UPF0125 (RnfH) family.</text>
</comment>
<accession>B4F063</accession>